<dbReference type="EMBL" id="CP000612">
    <property type="protein sequence ID" value="ABO50985.1"/>
    <property type="molecule type" value="Genomic_DNA"/>
</dbReference>
<dbReference type="RefSeq" id="WP_011878783.1">
    <property type="nucleotide sequence ID" value="NC_009253.1"/>
</dbReference>
<dbReference type="SMR" id="A4J7D2"/>
<dbReference type="STRING" id="349161.Dred_2475"/>
<dbReference type="KEGG" id="drm:Dred_2475"/>
<dbReference type="eggNOG" id="COG1381">
    <property type="taxonomic scope" value="Bacteria"/>
</dbReference>
<dbReference type="HOGENOM" id="CLU_066632_3_0_9"/>
<dbReference type="OrthoDB" id="9797083at2"/>
<dbReference type="Proteomes" id="UP000001556">
    <property type="component" value="Chromosome"/>
</dbReference>
<dbReference type="GO" id="GO:0043590">
    <property type="term" value="C:bacterial nucleoid"/>
    <property type="evidence" value="ECO:0007669"/>
    <property type="project" value="TreeGrafter"/>
</dbReference>
<dbReference type="GO" id="GO:0006310">
    <property type="term" value="P:DNA recombination"/>
    <property type="evidence" value="ECO:0007669"/>
    <property type="project" value="UniProtKB-UniRule"/>
</dbReference>
<dbReference type="GO" id="GO:0006302">
    <property type="term" value="P:double-strand break repair"/>
    <property type="evidence" value="ECO:0007669"/>
    <property type="project" value="TreeGrafter"/>
</dbReference>
<dbReference type="Gene3D" id="2.40.50.140">
    <property type="entry name" value="Nucleic acid-binding proteins"/>
    <property type="match status" value="1"/>
</dbReference>
<dbReference type="Gene3D" id="1.20.1440.120">
    <property type="entry name" value="Recombination protein O, C-terminal domain"/>
    <property type="match status" value="1"/>
</dbReference>
<dbReference type="HAMAP" id="MF_00201">
    <property type="entry name" value="RecO"/>
    <property type="match status" value="1"/>
</dbReference>
<dbReference type="InterPro" id="IPR037278">
    <property type="entry name" value="ARFGAP/RecO"/>
</dbReference>
<dbReference type="InterPro" id="IPR022572">
    <property type="entry name" value="DNA_rep/recomb_RecO_N"/>
</dbReference>
<dbReference type="InterPro" id="IPR012340">
    <property type="entry name" value="NA-bd_OB-fold"/>
</dbReference>
<dbReference type="InterPro" id="IPR003717">
    <property type="entry name" value="RecO"/>
</dbReference>
<dbReference type="InterPro" id="IPR042242">
    <property type="entry name" value="RecO_C"/>
</dbReference>
<dbReference type="NCBIfam" id="TIGR00613">
    <property type="entry name" value="reco"/>
    <property type="match status" value="1"/>
</dbReference>
<dbReference type="PANTHER" id="PTHR33991">
    <property type="entry name" value="DNA REPAIR PROTEIN RECO"/>
    <property type="match status" value="1"/>
</dbReference>
<dbReference type="PANTHER" id="PTHR33991:SF1">
    <property type="entry name" value="DNA REPAIR PROTEIN RECO"/>
    <property type="match status" value="1"/>
</dbReference>
<dbReference type="Pfam" id="PF02565">
    <property type="entry name" value="RecO_C"/>
    <property type="match status" value="1"/>
</dbReference>
<dbReference type="Pfam" id="PF11967">
    <property type="entry name" value="RecO_N"/>
    <property type="match status" value="1"/>
</dbReference>
<dbReference type="SUPFAM" id="SSF57863">
    <property type="entry name" value="ArfGap/RecO-like zinc finger"/>
    <property type="match status" value="1"/>
</dbReference>
<dbReference type="SUPFAM" id="SSF50249">
    <property type="entry name" value="Nucleic acid-binding proteins"/>
    <property type="match status" value="1"/>
</dbReference>
<feature type="chain" id="PRO_1000071721" description="DNA repair protein RecO">
    <location>
        <begin position="1"/>
        <end position="256"/>
    </location>
</feature>
<proteinExistence type="inferred from homology"/>
<sequence>MKIYKLDAIVLKSRDMREADKILTVYSIQRGKQRIVAHGAAKPNSRKRGAVQPFCFSEFMLHRGREIDAISQAELKEGFAEIRYDLDRLTAAAYITELLDGFVAEGEPNQNLFSLLYSALHLIAVGNSEMILRGFEAKLLGFSGLQPDLTNCSVCGAEIRETKVSFAVQQGGILCKDCATHEKRILKFSRGTVEVLKTLYRWELTKLQQLKVSEPLKTELSALLRSYIEYYLEKKLKTTEFMDRLYKSNLGRGTNI</sequence>
<comment type="function">
    <text evidence="1">Involved in DNA repair and RecF pathway recombination.</text>
</comment>
<comment type="similarity">
    <text evidence="1">Belongs to the RecO family.</text>
</comment>
<evidence type="ECO:0000255" key="1">
    <source>
        <dbReference type="HAMAP-Rule" id="MF_00201"/>
    </source>
</evidence>
<organism>
    <name type="scientific">Desulforamulus reducens (strain ATCC BAA-1160 / DSM 100696 / MI-1)</name>
    <name type="common">Desulfotomaculum reducens</name>
    <dbReference type="NCBI Taxonomy" id="349161"/>
    <lineage>
        <taxon>Bacteria</taxon>
        <taxon>Bacillati</taxon>
        <taxon>Bacillota</taxon>
        <taxon>Clostridia</taxon>
        <taxon>Eubacteriales</taxon>
        <taxon>Peptococcaceae</taxon>
        <taxon>Desulforamulus</taxon>
    </lineage>
</organism>
<protein>
    <recommendedName>
        <fullName evidence="1">DNA repair protein RecO</fullName>
    </recommendedName>
    <alternativeName>
        <fullName evidence="1">Recombination protein O</fullName>
    </alternativeName>
</protein>
<accession>A4J7D2</accession>
<reference key="1">
    <citation type="submission" date="2007-03" db="EMBL/GenBank/DDBJ databases">
        <title>Complete sequence of Desulfotomaculum reducens MI-1.</title>
        <authorList>
            <consortium name="US DOE Joint Genome Institute"/>
            <person name="Copeland A."/>
            <person name="Lucas S."/>
            <person name="Lapidus A."/>
            <person name="Barry K."/>
            <person name="Detter J.C."/>
            <person name="Glavina del Rio T."/>
            <person name="Hammon N."/>
            <person name="Israni S."/>
            <person name="Dalin E."/>
            <person name="Tice H."/>
            <person name="Pitluck S."/>
            <person name="Sims D."/>
            <person name="Brettin T."/>
            <person name="Bruce D."/>
            <person name="Han C."/>
            <person name="Tapia R."/>
            <person name="Schmutz J."/>
            <person name="Larimer F."/>
            <person name="Land M."/>
            <person name="Hauser L."/>
            <person name="Kyrpides N."/>
            <person name="Kim E."/>
            <person name="Tebo B.M."/>
            <person name="Richardson P."/>
        </authorList>
    </citation>
    <scope>NUCLEOTIDE SEQUENCE [LARGE SCALE GENOMIC DNA]</scope>
    <source>
        <strain>ATCC BAA-1160 / DSM 100696 / MI-1</strain>
    </source>
</reference>
<gene>
    <name evidence="1" type="primary">recO</name>
    <name type="ordered locus">Dred_2475</name>
</gene>
<keyword id="KW-0227">DNA damage</keyword>
<keyword id="KW-0233">DNA recombination</keyword>
<keyword id="KW-0234">DNA repair</keyword>
<keyword id="KW-1185">Reference proteome</keyword>
<name>RECO_DESRM</name>